<sequence length="404" mass="44469">MKLPIYLDYSATTPVDPRVAQKMADCLLVDGNFGNPASRSHVFGWKAEEAVENGRRQVAELINADPREIVWTSGATESDNLALKGVAHFYQTKGKHIITSKIEHKAVLDTARQLEREGFEVTYLEPGEDGIVTPAMVEAVLRDDTILVSLMHVNNEVGSINDIAAIGELTRSRGVLFHVDAAQSAGKVEIDLQKLKVDLMSFSAHKVYGPKGIGALYVSRKPRVRLEAIIHGGGHERGMRSGTLPTHQIVGMGEAFAIAKQEMVAENARIKALSDRFFKQVSNLEELYVNGSQTARVPHNLNLSFNYVEGESLLMSLKDIAVSSGSACTSASLEPSYVLRALGRNDELAHSSIRFSFGRFTTEEEVDYAAQKVCEAVNKLRELSPLWDMYKDGVDISKIEWAAH</sequence>
<dbReference type="EC" id="2.8.1.7" evidence="1"/>
<dbReference type="EMBL" id="CP000712">
    <property type="protein sequence ID" value="ABQ77034.1"/>
    <property type="molecule type" value="Genomic_DNA"/>
</dbReference>
<dbReference type="SMR" id="A5VYS4"/>
<dbReference type="KEGG" id="ppf:Pput_0872"/>
<dbReference type="eggNOG" id="COG1104">
    <property type="taxonomic scope" value="Bacteria"/>
</dbReference>
<dbReference type="HOGENOM" id="CLU_003433_0_2_6"/>
<dbReference type="UniPathway" id="UPA00266"/>
<dbReference type="GO" id="GO:1990221">
    <property type="term" value="C:L-cysteine desulfurase complex"/>
    <property type="evidence" value="ECO:0007669"/>
    <property type="project" value="UniProtKB-ARBA"/>
</dbReference>
<dbReference type="GO" id="GO:0051537">
    <property type="term" value="F:2 iron, 2 sulfur cluster binding"/>
    <property type="evidence" value="ECO:0007669"/>
    <property type="project" value="UniProtKB-UniRule"/>
</dbReference>
<dbReference type="GO" id="GO:0031071">
    <property type="term" value="F:cysteine desulfurase activity"/>
    <property type="evidence" value="ECO:0007669"/>
    <property type="project" value="UniProtKB-UniRule"/>
</dbReference>
<dbReference type="GO" id="GO:0046872">
    <property type="term" value="F:metal ion binding"/>
    <property type="evidence" value="ECO:0007669"/>
    <property type="project" value="UniProtKB-KW"/>
</dbReference>
<dbReference type="GO" id="GO:0030170">
    <property type="term" value="F:pyridoxal phosphate binding"/>
    <property type="evidence" value="ECO:0007669"/>
    <property type="project" value="UniProtKB-UniRule"/>
</dbReference>
<dbReference type="GO" id="GO:0044571">
    <property type="term" value="P:[2Fe-2S] cluster assembly"/>
    <property type="evidence" value="ECO:0007669"/>
    <property type="project" value="UniProtKB-UniRule"/>
</dbReference>
<dbReference type="FunFam" id="3.40.640.10:FF:000003">
    <property type="entry name" value="Cysteine desulfurase IscS"/>
    <property type="match status" value="1"/>
</dbReference>
<dbReference type="FunFam" id="3.90.1150.10:FF:000002">
    <property type="entry name" value="Cysteine desulfurase IscS"/>
    <property type="match status" value="1"/>
</dbReference>
<dbReference type="Gene3D" id="3.90.1150.10">
    <property type="entry name" value="Aspartate Aminotransferase, domain 1"/>
    <property type="match status" value="1"/>
</dbReference>
<dbReference type="Gene3D" id="3.40.640.10">
    <property type="entry name" value="Type I PLP-dependent aspartate aminotransferase-like (Major domain)"/>
    <property type="match status" value="1"/>
</dbReference>
<dbReference type="HAMAP" id="MF_00331">
    <property type="entry name" value="Cys_desulf_IscS"/>
    <property type="match status" value="1"/>
</dbReference>
<dbReference type="InterPro" id="IPR000192">
    <property type="entry name" value="Aminotrans_V_dom"/>
</dbReference>
<dbReference type="InterPro" id="IPR020578">
    <property type="entry name" value="Aminotrans_V_PyrdxlP_BS"/>
</dbReference>
<dbReference type="InterPro" id="IPR010240">
    <property type="entry name" value="Cys_deSase_IscS"/>
</dbReference>
<dbReference type="InterPro" id="IPR016454">
    <property type="entry name" value="Cysteine_dSase"/>
</dbReference>
<dbReference type="InterPro" id="IPR015424">
    <property type="entry name" value="PyrdxlP-dep_Trfase"/>
</dbReference>
<dbReference type="InterPro" id="IPR015421">
    <property type="entry name" value="PyrdxlP-dep_Trfase_major"/>
</dbReference>
<dbReference type="InterPro" id="IPR015422">
    <property type="entry name" value="PyrdxlP-dep_Trfase_small"/>
</dbReference>
<dbReference type="NCBIfam" id="TIGR02006">
    <property type="entry name" value="IscS"/>
    <property type="match status" value="1"/>
</dbReference>
<dbReference type="NCBIfam" id="NF010611">
    <property type="entry name" value="PRK14012.1"/>
    <property type="match status" value="1"/>
</dbReference>
<dbReference type="PANTHER" id="PTHR11601:SF34">
    <property type="entry name" value="CYSTEINE DESULFURASE"/>
    <property type="match status" value="1"/>
</dbReference>
<dbReference type="PANTHER" id="PTHR11601">
    <property type="entry name" value="CYSTEINE DESULFURYLASE FAMILY MEMBER"/>
    <property type="match status" value="1"/>
</dbReference>
<dbReference type="Pfam" id="PF00266">
    <property type="entry name" value="Aminotran_5"/>
    <property type="match status" value="1"/>
</dbReference>
<dbReference type="PIRSF" id="PIRSF005572">
    <property type="entry name" value="NifS"/>
    <property type="match status" value="1"/>
</dbReference>
<dbReference type="SUPFAM" id="SSF53383">
    <property type="entry name" value="PLP-dependent transferases"/>
    <property type="match status" value="1"/>
</dbReference>
<dbReference type="PROSITE" id="PS00595">
    <property type="entry name" value="AA_TRANSFER_CLASS_5"/>
    <property type="match status" value="1"/>
</dbReference>
<reference key="1">
    <citation type="submission" date="2007-05" db="EMBL/GenBank/DDBJ databases">
        <title>Complete sequence of Pseudomonas putida F1.</title>
        <authorList>
            <consortium name="US DOE Joint Genome Institute"/>
            <person name="Copeland A."/>
            <person name="Lucas S."/>
            <person name="Lapidus A."/>
            <person name="Barry K."/>
            <person name="Detter J.C."/>
            <person name="Glavina del Rio T."/>
            <person name="Hammon N."/>
            <person name="Israni S."/>
            <person name="Dalin E."/>
            <person name="Tice H."/>
            <person name="Pitluck S."/>
            <person name="Chain P."/>
            <person name="Malfatti S."/>
            <person name="Shin M."/>
            <person name="Vergez L."/>
            <person name="Schmutz J."/>
            <person name="Larimer F."/>
            <person name="Land M."/>
            <person name="Hauser L."/>
            <person name="Kyrpides N."/>
            <person name="Lykidis A."/>
            <person name="Parales R."/>
            <person name="Richardson P."/>
        </authorList>
    </citation>
    <scope>NUCLEOTIDE SEQUENCE [LARGE SCALE GENOMIC DNA]</scope>
    <source>
        <strain>ATCC 700007 / DSM 6899 / JCM 31910 / BCRC 17059 / LMG 24140 / F1</strain>
    </source>
</reference>
<gene>
    <name evidence="1" type="primary">iscS</name>
    <name type="ordered locus">Pput_0872</name>
</gene>
<organism>
    <name type="scientific">Pseudomonas putida (strain ATCC 700007 / DSM 6899 / JCM 31910 / BCRC 17059 / LMG 24140 / F1)</name>
    <dbReference type="NCBI Taxonomy" id="351746"/>
    <lineage>
        <taxon>Bacteria</taxon>
        <taxon>Pseudomonadati</taxon>
        <taxon>Pseudomonadota</taxon>
        <taxon>Gammaproteobacteria</taxon>
        <taxon>Pseudomonadales</taxon>
        <taxon>Pseudomonadaceae</taxon>
        <taxon>Pseudomonas</taxon>
    </lineage>
</organism>
<keyword id="KW-0001">2Fe-2S</keyword>
<keyword id="KW-0963">Cytoplasm</keyword>
<keyword id="KW-0408">Iron</keyword>
<keyword id="KW-0411">Iron-sulfur</keyword>
<keyword id="KW-0479">Metal-binding</keyword>
<keyword id="KW-0663">Pyridoxal phosphate</keyword>
<keyword id="KW-0808">Transferase</keyword>
<protein>
    <recommendedName>
        <fullName evidence="1">Cysteine desulfurase IscS</fullName>
        <ecNumber evidence="1">2.8.1.7</ecNumber>
    </recommendedName>
</protein>
<proteinExistence type="inferred from homology"/>
<feature type="chain" id="PRO_1000019428" description="Cysteine desulfurase IscS">
    <location>
        <begin position="1"/>
        <end position="404"/>
    </location>
</feature>
<feature type="active site" description="Cysteine persulfide intermediate" evidence="1">
    <location>
        <position position="328"/>
    </location>
</feature>
<feature type="binding site" evidence="1">
    <location>
        <begin position="75"/>
        <end position="76"/>
    </location>
    <ligand>
        <name>pyridoxal 5'-phosphate</name>
        <dbReference type="ChEBI" id="CHEBI:597326"/>
    </ligand>
</feature>
<feature type="binding site" evidence="1">
    <location>
        <position position="155"/>
    </location>
    <ligand>
        <name>pyridoxal 5'-phosphate</name>
        <dbReference type="ChEBI" id="CHEBI:597326"/>
    </ligand>
</feature>
<feature type="binding site" evidence="1">
    <location>
        <position position="183"/>
    </location>
    <ligand>
        <name>pyridoxal 5'-phosphate</name>
        <dbReference type="ChEBI" id="CHEBI:597326"/>
    </ligand>
</feature>
<feature type="binding site" evidence="1">
    <location>
        <begin position="203"/>
        <end position="205"/>
    </location>
    <ligand>
        <name>pyridoxal 5'-phosphate</name>
        <dbReference type="ChEBI" id="CHEBI:597326"/>
    </ligand>
</feature>
<feature type="binding site" evidence="1">
    <location>
        <position position="243"/>
    </location>
    <ligand>
        <name>pyridoxal 5'-phosphate</name>
        <dbReference type="ChEBI" id="CHEBI:597326"/>
    </ligand>
</feature>
<feature type="binding site" description="via persulfide group" evidence="1">
    <location>
        <position position="328"/>
    </location>
    <ligand>
        <name>[2Fe-2S] cluster</name>
        <dbReference type="ChEBI" id="CHEBI:190135"/>
        <note>ligand shared with IscU</note>
    </ligand>
</feature>
<feature type="modified residue" description="N6-(pyridoxal phosphate)lysine" evidence="1">
    <location>
        <position position="206"/>
    </location>
</feature>
<evidence type="ECO:0000255" key="1">
    <source>
        <dbReference type="HAMAP-Rule" id="MF_00331"/>
    </source>
</evidence>
<comment type="function">
    <text evidence="1">Master enzyme that delivers sulfur to a number of partners involved in Fe-S cluster assembly, tRNA modification or cofactor biosynthesis. Catalyzes the removal of elemental sulfur atoms from cysteine to produce alanine. Functions as a sulfur delivery protein for Fe-S cluster synthesis onto IscU, an Fe-S scaffold assembly protein, as well as other S acceptor proteins.</text>
</comment>
<comment type="catalytic activity">
    <reaction evidence="1">
        <text>(sulfur carrier)-H + L-cysteine = (sulfur carrier)-SH + L-alanine</text>
        <dbReference type="Rhea" id="RHEA:43892"/>
        <dbReference type="Rhea" id="RHEA-COMP:14737"/>
        <dbReference type="Rhea" id="RHEA-COMP:14739"/>
        <dbReference type="ChEBI" id="CHEBI:29917"/>
        <dbReference type="ChEBI" id="CHEBI:35235"/>
        <dbReference type="ChEBI" id="CHEBI:57972"/>
        <dbReference type="ChEBI" id="CHEBI:64428"/>
        <dbReference type="EC" id="2.8.1.7"/>
    </reaction>
</comment>
<comment type="cofactor">
    <cofactor evidence="1">
        <name>pyridoxal 5'-phosphate</name>
        <dbReference type="ChEBI" id="CHEBI:597326"/>
    </cofactor>
</comment>
<comment type="pathway">
    <text evidence="1">Cofactor biosynthesis; iron-sulfur cluster biosynthesis.</text>
</comment>
<comment type="subunit">
    <text evidence="1">Homodimer. Forms a heterotetramer with IscU, interacts with other sulfur acceptors.</text>
</comment>
<comment type="subcellular location">
    <subcellularLocation>
        <location evidence="1">Cytoplasm</location>
    </subcellularLocation>
</comment>
<comment type="similarity">
    <text evidence="1">Belongs to the class-V pyridoxal-phosphate-dependent aminotransferase family. NifS/IscS subfamily.</text>
</comment>
<name>ISCS_PSEP1</name>
<accession>A5VYS4</accession>